<reference key="1">
    <citation type="submission" date="2008-08" db="EMBL/GenBank/DDBJ databases">
        <title>Complete sequence of Vibrio fischeri strain MJ11.</title>
        <authorList>
            <person name="Mandel M.J."/>
            <person name="Stabb E.V."/>
            <person name="Ruby E.G."/>
            <person name="Ferriera S."/>
            <person name="Johnson J."/>
            <person name="Kravitz S."/>
            <person name="Beeson K."/>
            <person name="Sutton G."/>
            <person name="Rogers Y.-H."/>
            <person name="Friedman R."/>
            <person name="Frazier M."/>
            <person name="Venter J.C."/>
        </authorList>
    </citation>
    <scope>NUCLEOTIDE SEQUENCE [LARGE SCALE GENOMIC DNA]</scope>
    <source>
        <strain>MJ11</strain>
    </source>
</reference>
<proteinExistence type="inferred from homology"/>
<organism>
    <name type="scientific">Aliivibrio fischeri (strain MJ11)</name>
    <name type="common">Vibrio fischeri</name>
    <dbReference type="NCBI Taxonomy" id="388396"/>
    <lineage>
        <taxon>Bacteria</taxon>
        <taxon>Pseudomonadati</taxon>
        <taxon>Pseudomonadota</taxon>
        <taxon>Gammaproteobacteria</taxon>
        <taxon>Vibrionales</taxon>
        <taxon>Vibrionaceae</taxon>
        <taxon>Aliivibrio</taxon>
    </lineage>
</organism>
<name>IF2_ALIFM</name>
<protein>
    <recommendedName>
        <fullName evidence="2">Translation initiation factor IF-2</fullName>
    </recommendedName>
</protein>
<dbReference type="EMBL" id="CP001139">
    <property type="protein sequence ID" value="ACH65211.1"/>
    <property type="molecule type" value="Genomic_DNA"/>
</dbReference>
<dbReference type="RefSeq" id="WP_012532896.1">
    <property type="nucleotide sequence ID" value="NC_011184.1"/>
</dbReference>
<dbReference type="SMR" id="B5FA79"/>
<dbReference type="KEGG" id="vfm:VFMJ11_0487"/>
<dbReference type="HOGENOM" id="CLU_006301_6_3_6"/>
<dbReference type="Proteomes" id="UP000001857">
    <property type="component" value="Chromosome I"/>
</dbReference>
<dbReference type="GO" id="GO:0005829">
    <property type="term" value="C:cytosol"/>
    <property type="evidence" value="ECO:0007669"/>
    <property type="project" value="TreeGrafter"/>
</dbReference>
<dbReference type="GO" id="GO:0005525">
    <property type="term" value="F:GTP binding"/>
    <property type="evidence" value="ECO:0007669"/>
    <property type="project" value="UniProtKB-KW"/>
</dbReference>
<dbReference type="GO" id="GO:0003924">
    <property type="term" value="F:GTPase activity"/>
    <property type="evidence" value="ECO:0007669"/>
    <property type="project" value="UniProtKB-UniRule"/>
</dbReference>
<dbReference type="GO" id="GO:0097216">
    <property type="term" value="F:guanosine tetraphosphate binding"/>
    <property type="evidence" value="ECO:0007669"/>
    <property type="project" value="UniProtKB-ARBA"/>
</dbReference>
<dbReference type="GO" id="GO:0003743">
    <property type="term" value="F:translation initiation factor activity"/>
    <property type="evidence" value="ECO:0007669"/>
    <property type="project" value="UniProtKB-UniRule"/>
</dbReference>
<dbReference type="CDD" id="cd01887">
    <property type="entry name" value="IF2_eIF5B"/>
    <property type="match status" value="1"/>
</dbReference>
<dbReference type="CDD" id="cd03702">
    <property type="entry name" value="IF2_mtIF2_II"/>
    <property type="match status" value="1"/>
</dbReference>
<dbReference type="CDD" id="cd03692">
    <property type="entry name" value="mtIF2_IVc"/>
    <property type="match status" value="1"/>
</dbReference>
<dbReference type="FunFam" id="2.40.30.10:FF:000007">
    <property type="entry name" value="Translation initiation factor IF-2"/>
    <property type="match status" value="1"/>
</dbReference>
<dbReference type="FunFam" id="2.40.30.10:FF:000008">
    <property type="entry name" value="Translation initiation factor IF-2"/>
    <property type="match status" value="1"/>
</dbReference>
<dbReference type="FunFam" id="3.40.50.10050:FF:000001">
    <property type="entry name" value="Translation initiation factor IF-2"/>
    <property type="match status" value="1"/>
</dbReference>
<dbReference type="FunFam" id="3.40.50.300:FF:000019">
    <property type="entry name" value="Translation initiation factor IF-2"/>
    <property type="match status" value="1"/>
</dbReference>
<dbReference type="Gene3D" id="3.40.50.300">
    <property type="entry name" value="P-loop containing nucleotide triphosphate hydrolases"/>
    <property type="match status" value="1"/>
</dbReference>
<dbReference type="Gene3D" id="3.30.56.50">
    <property type="entry name" value="Putative DNA-binding domain, N-terminal subdomain of bacterial translation initiation factor IF2"/>
    <property type="match status" value="1"/>
</dbReference>
<dbReference type="Gene3D" id="2.40.30.10">
    <property type="entry name" value="Translation factors"/>
    <property type="match status" value="2"/>
</dbReference>
<dbReference type="Gene3D" id="3.40.50.10050">
    <property type="entry name" value="Translation initiation factor IF- 2, domain 3"/>
    <property type="match status" value="1"/>
</dbReference>
<dbReference type="HAMAP" id="MF_00100_B">
    <property type="entry name" value="IF_2_B"/>
    <property type="match status" value="1"/>
</dbReference>
<dbReference type="InterPro" id="IPR009061">
    <property type="entry name" value="DNA-bd_dom_put_sf"/>
</dbReference>
<dbReference type="InterPro" id="IPR053905">
    <property type="entry name" value="EF-G-like_DII"/>
</dbReference>
<dbReference type="InterPro" id="IPR004161">
    <property type="entry name" value="EFTu-like_2"/>
</dbReference>
<dbReference type="InterPro" id="IPR013575">
    <property type="entry name" value="IF2_assoc_dom_bac"/>
</dbReference>
<dbReference type="InterPro" id="IPR044145">
    <property type="entry name" value="IF2_II"/>
</dbReference>
<dbReference type="InterPro" id="IPR006847">
    <property type="entry name" value="IF2_N"/>
</dbReference>
<dbReference type="InterPro" id="IPR027417">
    <property type="entry name" value="P-loop_NTPase"/>
</dbReference>
<dbReference type="InterPro" id="IPR005225">
    <property type="entry name" value="Small_GTP-bd"/>
</dbReference>
<dbReference type="InterPro" id="IPR000795">
    <property type="entry name" value="T_Tr_GTP-bd_dom"/>
</dbReference>
<dbReference type="InterPro" id="IPR000178">
    <property type="entry name" value="TF_IF2_bacterial-like"/>
</dbReference>
<dbReference type="InterPro" id="IPR015760">
    <property type="entry name" value="TIF_IF2"/>
</dbReference>
<dbReference type="InterPro" id="IPR023115">
    <property type="entry name" value="TIF_IF2_dom3"/>
</dbReference>
<dbReference type="InterPro" id="IPR036925">
    <property type="entry name" value="TIF_IF2_dom3_sf"/>
</dbReference>
<dbReference type="InterPro" id="IPR009000">
    <property type="entry name" value="Transl_B-barrel_sf"/>
</dbReference>
<dbReference type="NCBIfam" id="TIGR00487">
    <property type="entry name" value="IF-2"/>
    <property type="match status" value="1"/>
</dbReference>
<dbReference type="NCBIfam" id="TIGR00231">
    <property type="entry name" value="small_GTP"/>
    <property type="match status" value="1"/>
</dbReference>
<dbReference type="PANTHER" id="PTHR43381:SF5">
    <property type="entry name" value="TR-TYPE G DOMAIN-CONTAINING PROTEIN"/>
    <property type="match status" value="1"/>
</dbReference>
<dbReference type="PANTHER" id="PTHR43381">
    <property type="entry name" value="TRANSLATION INITIATION FACTOR IF-2-RELATED"/>
    <property type="match status" value="1"/>
</dbReference>
<dbReference type="Pfam" id="PF22042">
    <property type="entry name" value="EF-G_D2"/>
    <property type="match status" value="1"/>
</dbReference>
<dbReference type="Pfam" id="PF00009">
    <property type="entry name" value="GTP_EFTU"/>
    <property type="match status" value="1"/>
</dbReference>
<dbReference type="Pfam" id="PF03144">
    <property type="entry name" value="GTP_EFTU_D2"/>
    <property type="match status" value="1"/>
</dbReference>
<dbReference type="Pfam" id="PF11987">
    <property type="entry name" value="IF-2"/>
    <property type="match status" value="1"/>
</dbReference>
<dbReference type="Pfam" id="PF08364">
    <property type="entry name" value="IF2_assoc"/>
    <property type="match status" value="1"/>
</dbReference>
<dbReference type="Pfam" id="PF04760">
    <property type="entry name" value="IF2_N"/>
    <property type="match status" value="2"/>
</dbReference>
<dbReference type="SUPFAM" id="SSF52156">
    <property type="entry name" value="Initiation factor IF2/eIF5b, domain 3"/>
    <property type="match status" value="1"/>
</dbReference>
<dbReference type="SUPFAM" id="SSF52540">
    <property type="entry name" value="P-loop containing nucleoside triphosphate hydrolases"/>
    <property type="match status" value="1"/>
</dbReference>
<dbReference type="SUPFAM" id="SSF46955">
    <property type="entry name" value="Putative DNA-binding domain"/>
    <property type="match status" value="1"/>
</dbReference>
<dbReference type="SUPFAM" id="SSF50447">
    <property type="entry name" value="Translation proteins"/>
    <property type="match status" value="2"/>
</dbReference>
<dbReference type="PROSITE" id="PS51722">
    <property type="entry name" value="G_TR_2"/>
    <property type="match status" value="1"/>
</dbReference>
<dbReference type="PROSITE" id="PS01176">
    <property type="entry name" value="IF2"/>
    <property type="match status" value="1"/>
</dbReference>
<gene>
    <name evidence="2" type="primary">infB</name>
    <name type="ordered locus">VFMJ11_0487</name>
</gene>
<accession>B5FA79</accession>
<comment type="function">
    <text evidence="2">One of the essential components for the initiation of protein synthesis. Protects formylmethionyl-tRNA from spontaneous hydrolysis and promotes its binding to the 30S ribosomal subunits. Also involved in the hydrolysis of GTP during the formation of the 70S ribosomal complex.</text>
</comment>
<comment type="subcellular location">
    <subcellularLocation>
        <location evidence="2">Cytoplasm</location>
    </subcellularLocation>
</comment>
<comment type="similarity">
    <text evidence="2">Belongs to the TRAFAC class translation factor GTPase superfamily. Classic translation factor GTPase family. IF-2 subfamily.</text>
</comment>
<feature type="chain" id="PRO_1000093843" description="Translation initiation factor IF-2">
    <location>
        <begin position="1"/>
        <end position="893"/>
    </location>
</feature>
<feature type="domain" description="tr-type G">
    <location>
        <begin position="392"/>
        <end position="561"/>
    </location>
</feature>
<feature type="region of interest" description="Disordered" evidence="3">
    <location>
        <begin position="51"/>
        <end position="203"/>
    </location>
</feature>
<feature type="region of interest" description="Disordered" evidence="3">
    <location>
        <begin position="216"/>
        <end position="300"/>
    </location>
</feature>
<feature type="region of interest" description="G1" evidence="1">
    <location>
        <begin position="401"/>
        <end position="408"/>
    </location>
</feature>
<feature type="region of interest" description="G2" evidence="1">
    <location>
        <begin position="426"/>
        <end position="430"/>
    </location>
</feature>
<feature type="region of interest" description="G3" evidence="1">
    <location>
        <begin position="447"/>
        <end position="450"/>
    </location>
</feature>
<feature type="region of interest" description="G4" evidence="1">
    <location>
        <begin position="501"/>
        <end position="504"/>
    </location>
</feature>
<feature type="region of interest" description="G5" evidence="1">
    <location>
        <begin position="537"/>
        <end position="539"/>
    </location>
</feature>
<feature type="compositionally biased region" description="Basic and acidic residues" evidence="3">
    <location>
        <begin position="102"/>
        <end position="203"/>
    </location>
</feature>
<feature type="compositionally biased region" description="Basic and acidic residues" evidence="3">
    <location>
        <begin position="216"/>
        <end position="238"/>
    </location>
</feature>
<feature type="compositionally biased region" description="Basic and acidic residues" evidence="3">
    <location>
        <begin position="245"/>
        <end position="261"/>
    </location>
</feature>
<feature type="binding site" evidence="2">
    <location>
        <begin position="401"/>
        <end position="408"/>
    </location>
    <ligand>
        <name>GTP</name>
        <dbReference type="ChEBI" id="CHEBI:37565"/>
    </ligand>
</feature>
<feature type="binding site" evidence="2">
    <location>
        <begin position="447"/>
        <end position="451"/>
    </location>
    <ligand>
        <name>GTP</name>
        <dbReference type="ChEBI" id="CHEBI:37565"/>
    </ligand>
</feature>
<feature type="binding site" evidence="2">
    <location>
        <begin position="501"/>
        <end position="504"/>
    </location>
    <ligand>
        <name>GTP</name>
        <dbReference type="ChEBI" id="CHEBI:37565"/>
    </ligand>
</feature>
<sequence length="893" mass="97336">MTKLTVKALSEEIGTPVDRLLQQFSDAGINKKDGDSVSEGEKQSLLVHLKKEHGSADDSASPTRLTLQRKTRSTLSVAGSGGKSKDVQVEVRKKRTYVKASALEEEKKAEQLKAEAEEQAKRDAEEAAVRELEQKAQREAEEQAKREAEAEAKAKREAEEKAKRAEADKAKKEMTKKNEQAKKEADELKARQELEATRKAEAEAAKLVEEARKLAEENEARWKEEEQKKSAAEKDADYHVTTSSHAREAEDAADRKEEQQPRRRKKKAKPAEAAAPRGGRNQRGGRNKKAQVNKPTSMQHGFDKSATVAKQDVAIGETIVVSELASKMSVKATEVIKVMMKMGAMATINQVIDQETAQLVAEEMGHKVILRKENELEEAVLSDRDNSAEAEGRAPVVTIMGHVDHGKTSTLDYIRRAHVADAEAGGITQHIGAYHVETDNGMITFLDTPGHAAFTAMRARGAQATDIVVLVVAADDGVMPQTIEAIQHAKAAGVPLIVAVNKIDKEGANPDNVKNELAQYDVIPEEWGGENIFVHISAKQGTNIDGLLEAILLQSEVLELTAVREGMASGVVVESRLDKGRGPVATVLVQSGTLNKGDIVLCGQEYGRVRAMRDENGKDIESAGPSIPVEILGLSGVPASGDEATVVRDERKAREVANYRQGKFRDVKLARQQKAKLENMFANMEAGEVAELNVVLKADVQGSVEAIADSLLKLSTDEVKVNIVGSGVGGITETDATLAAASNAIILGFNVRADATARRTVENENLDLRYYSIIYQLIDEVKAAMGGMLAPEFKQEIIGLAQVRDVFKSPKLGAIAGCMVTEGTIKRSNPIRVLRDNVVIYEGELESLRRFKDDVAEVKNGYECGIGVKNYNDVRVGDQIEVFEIVEIKRTLD</sequence>
<evidence type="ECO:0000250" key="1"/>
<evidence type="ECO:0000255" key="2">
    <source>
        <dbReference type="HAMAP-Rule" id="MF_00100"/>
    </source>
</evidence>
<evidence type="ECO:0000256" key="3">
    <source>
        <dbReference type="SAM" id="MobiDB-lite"/>
    </source>
</evidence>
<keyword id="KW-0963">Cytoplasm</keyword>
<keyword id="KW-0342">GTP-binding</keyword>
<keyword id="KW-0396">Initiation factor</keyword>
<keyword id="KW-0547">Nucleotide-binding</keyword>
<keyword id="KW-0648">Protein biosynthesis</keyword>